<feature type="chain" id="PRO_0000453099" description="Mitogen-activated protein kinase adapter protein MST50">
    <location>
        <begin position="1"/>
        <end position="489"/>
    </location>
</feature>
<feature type="domain" description="SAM" evidence="2">
    <location>
        <begin position="69"/>
        <end position="132"/>
    </location>
</feature>
<feature type="domain" description="Ras-associating" evidence="1">
    <location>
        <begin position="377"/>
        <end position="457"/>
    </location>
</feature>
<feature type="region of interest" description="Disordered" evidence="3">
    <location>
        <begin position="1"/>
        <end position="56"/>
    </location>
</feature>
<feature type="region of interest" description="Disordered" evidence="3">
    <location>
        <begin position="207"/>
        <end position="285"/>
    </location>
</feature>
<feature type="region of interest" description="Disordered" evidence="3">
    <location>
        <begin position="309"/>
        <end position="379"/>
    </location>
</feature>
<feature type="compositionally biased region" description="Polar residues" evidence="3">
    <location>
        <begin position="37"/>
        <end position="54"/>
    </location>
</feature>
<feature type="compositionally biased region" description="Polar residues" evidence="3">
    <location>
        <begin position="256"/>
        <end position="265"/>
    </location>
</feature>
<feature type="compositionally biased region" description="Polar residues" evidence="3">
    <location>
        <begin position="328"/>
        <end position="346"/>
    </location>
</feature>
<dbReference type="EMBL" id="CM001233">
    <property type="protein sequence ID" value="EHA52936.1"/>
    <property type="molecule type" value="Genomic_DNA"/>
</dbReference>
<dbReference type="RefSeq" id="XP_003712743.1">
    <property type="nucleotide sequence ID" value="XM_003712695.1"/>
</dbReference>
<dbReference type="SMR" id="G4N525"/>
<dbReference type="STRING" id="242507.G4N525"/>
<dbReference type="EnsemblFungi" id="MGG_05199T0">
    <property type="protein sequence ID" value="MGG_05199T0"/>
    <property type="gene ID" value="MGG_05199"/>
</dbReference>
<dbReference type="GeneID" id="2675335"/>
<dbReference type="KEGG" id="mgr:MGG_05199"/>
<dbReference type="VEuPathDB" id="FungiDB:MGG_05199"/>
<dbReference type="eggNOG" id="ENOG502QQYX">
    <property type="taxonomic scope" value="Eukaryota"/>
</dbReference>
<dbReference type="HOGENOM" id="CLU_021546_0_0_1"/>
<dbReference type="InParanoid" id="G4N525"/>
<dbReference type="OMA" id="DWTAEEC"/>
<dbReference type="OrthoDB" id="445896at2759"/>
<dbReference type="PHI-base" id="PHI:2121"/>
<dbReference type="Proteomes" id="UP000009058">
    <property type="component" value="Chromosome 3"/>
</dbReference>
<dbReference type="GO" id="GO:0007165">
    <property type="term" value="P:signal transduction"/>
    <property type="evidence" value="ECO:0007669"/>
    <property type="project" value="InterPro"/>
</dbReference>
<dbReference type="CDD" id="cd01786">
    <property type="entry name" value="RA_STE50"/>
    <property type="match status" value="1"/>
</dbReference>
<dbReference type="CDD" id="cd09533">
    <property type="entry name" value="SAM_Ste50-like_fungal"/>
    <property type="match status" value="1"/>
</dbReference>
<dbReference type="Gene3D" id="3.10.20.90">
    <property type="entry name" value="Phosphatidylinositol 3-kinase Catalytic Subunit, Chain A, domain 1"/>
    <property type="match status" value="1"/>
</dbReference>
<dbReference type="Gene3D" id="1.10.150.50">
    <property type="entry name" value="Transcription Factor, Ets-1"/>
    <property type="match status" value="1"/>
</dbReference>
<dbReference type="InterPro" id="IPR000159">
    <property type="entry name" value="RA_dom"/>
</dbReference>
<dbReference type="InterPro" id="IPR001660">
    <property type="entry name" value="SAM"/>
</dbReference>
<dbReference type="InterPro" id="IPR013761">
    <property type="entry name" value="SAM/pointed_sf"/>
</dbReference>
<dbReference type="InterPro" id="IPR051569">
    <property type="entry name" value="SHANK"/>
</dbReference>
<dbReference type="InterPro" id="IPR029071">
    <property type="entry name" value="Ubiquitin-like_domsf"/>
</dbReference>
<dbReference type="PANTHER" id="PTHR24135:SF28">
    <property type="entry name" value="LD13733P"/>
    <property type="match status" value="1"/>
</dbReference>
<dbReference type="PANTHER" id="PTHR24135">
    <property type="entry name" value="SH3 AND MULTIPLE ANKYRIN REPEAT DOMAINS PROTEIN"/>
    <property type="match status" value="1"/>
</dbReference>
<dbReference type="Pfam" id="PF00788">
    <property type="entry name" value="RA"/>
    <property type="match status" value="1"/>
</dbReference>
<dbReference type="Pfam" id="PF07647">
    <property type="entry name" value="SAM_2"/>
    <property type="match status" value="1"/>
</dbReference>
<dbReference type="SMART" id="SM00314">
    <property type="entry name" value="RA"/>
    <property type="match status" value="1"/>
</dbReference>
<dbReference type="SMART" id="SM00454">
    <property type="entry name" value="SAM"/>
    <property type="match status" value="1"/>
</dbReference>
<dbReference type="SUPFAM" id="SSF47769">
    <property type="entry name" value="SAM/Pointed domain"/>
    <property type="match status" value="1"/>
</dbReference>
<dbReference type="SUPFAM" id="SSF54236">
    <property type="entry name" value="Ubiquitin-like"/>
    <property type="match status" value="1"/>
</dbReference>
<dbReference type="PROSITE" id="PS50200">
    <property type="entry name" value="RA"/>
    <property type="match status" value="1"/>
</dbReference>
<dbReference type="PROSITE" id="PS50105">
    <property type="entry name" value="SAM_DOMAIN"/>
    <property type="match status" value="1"/>
</dbReference>
<gene>
    <name evidence="7" type="primary">MTS50</name>
    <name type="ORF">MGG_05199</name>
</gene>
<sequence>MSFNTGTAYAESDADDEYERDIHDSSPIDATDAEASPTESDPPSNEHTPTTYGYRSSADRLPETIISEWTADECADFIATIGLEQYSTRFVENEIVGEALVALLHDDLKSMGIHSVGHRLTILRSVYDVKKAQDVPVESDHYVPLTAENEGQYATAKDIKNLVEQLRLRDERMHLFEQDFRRLAEDFRRLREDMLPALRLAKDAQQPLPHLNNGSAYAGYDTTISPPAPTPSTSGQSGGGLKRQWSTKKIMLGTTPKATSPTHLQTAHDRSLAEQTLDPSSAAERAVMSSSHLAINGLVPSATSPSYPSINIPSPTSPPNTLGGATLASRSYRSDQPTPSSRSTFAESDYAHPGGRDKQPVAPRRMQTPAPDTPSGSNASVEIFKSFRVSMDDPCYKVLPAALKKYQINAPWDQYALYIVYGDQERCLGLEEKPLILFKQLDKEGKKPMFMLRKTNNAQVDIGNEAPGSAGLGSARGAATGYDPPGGII</sequence>
<keyword id="KW-1185">Reference proteome</keyword>
<keyword id="KW-0843">Virulence</keyword>
<protein>
    <recommendedName>
        <fullName evidence="7">Mitogen-activated protein kinase adapter protein MST50</fullName>
    </recommendedName>
</protein>
<comment type="function">
    <text evidence="4 5 6">Mitogen-activated protein kinase adapter protein; part of the MST11-MST7-PMK1 MAP kinase (MAPK) cascade that is essential for appressorium formation, penetration and invasive growth (PubMed:15749760, PubMed:23454094). Binds to the MAPKKK MST11 and the MAPKK MST7 to maintain the stability of the MST11-MST7 complex for the phosphorylation of the MAPK PMK1 (PubMed:15749760). Is also involved in the MPS1 and OSM1 MAPK pathways, and especially plays a role in the activation of MPS1 in response to cell wall stress (PubMed:28244240). Its function differs in the 3 MAPK pathways (PubMed:28244240).</text>
</comment>
<comment type="subunit">
    <text evidence="4 6">Interacts with MST7 and MST11 (PubMed:15749760). Interacts with MCK1, MKK2 and HIK1 (PubMed:28244240).</text>
</comment>
<comment type="domain">
    <text evidence="6">The sterile alpha-motif (SAM), but not the Ras-association domain, is important for its interaction with MCK1 and responses to cell wall and oxidative stresses.</text>
</comment>
<comment type="disruption phenotype">
    <text evidence="5 6">Impairs the formation of appressoria and the ability to infect rice plants (PubMed:23454094). Leads to reduced MAPK MPS1 activation under stress conditions (PubMed:28244240). Affects OSM1 phosphorylation in response to hyperosmotic stress (PubMed:28244240).</text>
</comment>
<organism>
    <name type="scientific">Pyricularia oryzae (strain 70-15 / ATCC MYA-4617 / FGSC 8958)</name>
    <name type="common">Rice blast fungus</name>
    <name type="synonym">Magnaporthe oryzae</name>
    <dbReference type="NCBI Taxonomy" id="242507"/>
    <lineage>
        <taxon>Eukaryota</taxon>
        <taxon>Fungi</taxon>
        <taxon>Dikarya</taxon>
        <taxon>Ascomycota</taxon>
        <taxon>Pezizomycotina</taxon>
        <taxon>Sordariomycetes</taxon>
        <taxon>Sordariomycetidae</taxon>
        <taxon>Magnaporthales</taxon>
        <taxon>Pyriculariaceae</taxon>
        <taxon>Pyricularia</taxon>
    </lineage>
</organism>
<evidence type="ECO:0000255" key="1">
    <source>
        <dbReference type="PROSITE-ProRule" id="PRU00166"/>
    </source>
</evidence>
<evidence type="ECO:0000255" key="2">
    <source>
        <dbReference type="PROSITE-ProRule" id="PRU00184"/>
    </source>
</evidence>
<evidence type="ECO:0000256" key="3">
    <source>
        <dbReference type="SAM" id="MobiDB-lite"/>
    </source>
</evidence>
<evidence type="ECO:0000269" key="4">
    <source>
    </source>
</evidence>
<evidence type="ECO:0000269" key="5">
    <source>
    </source>
</evidence>
<evidence type="ECO:0000269" key="6">
    <source>
    </source>
</evidence>
<evidence type="ECO:0000303" key="7">
    <source>
    </source>
</evidence>
<accession>G4N525</accession>
<name>MST50_PYRO7</name>
<proteinExistence type="evidence at protein level"/>
<reference key="1">
    <citation type="journal article" date="2005" name="Nature">
        <title>The genome sequence of the rice blast fungus Magnaporthe grisea.</title>
        <authorList>
            <person name="Dean R.A."/>
            <person name="Talbot N.J."/>
            <person name="Ebbole D.J."/>
            <person name="Farman M.L."/>
            <person name="Mitchell T.K."/>
            <person name="Orbach M.J."/>
            <person name="Thon M.R."/>
            <person name="Kulkarni R."/>
            <person name="Xu J.-R."/>
            <person name="Pan H."/>
            <person name="Read N.D."/>
            <person name="Lee Y.-H."/>
            <person name="Carbone I."/>
            <person name="Brown D."/>
            <person name="Oh Y.Y."/>
            <person name="Donofrio N."/>
            <person name="Jeong J.S."/>
            <person name="Soanes D.M."/>
            <person name="Djonovic S."/>
            <person name="Kolomiets E."/>
            <person name="Rehmeyer C."/>
            <person name="Li W."/>
            <person name="Harding M."/>
            <person name="Kim S."/>
            <person name="Lebrun M.-H."/>
            <person name="Bohnert H."/>
            <person name="Coughlan S."/>
            <person name="Butler J."/>
            <person name="Calvo S.E."/>
            <person name="Ma L.-J."/>
            <person name="Nicol R."/>
            <person name="Purcell S."/>
            <person name="Nusbaum C."/>
            <person name="Galagan J.E."/>
            <person name="Birren B.W."/>
        </authorList>
    </citation>
    <scope>NUCLEOTIDE SEQUENCE [LARGE SCALE GENOMIC DNA]</scope>
    <source>
        <strain>70-15 / ATCC MYA-4617 / FGSC 8958</strain>
    </source>
</reference>
<reference key="2">
    <citation type="journal article" date="2005" name="Plant Cell">
        <title>A mitogen-activated protein kinase cascade regulating infection-related morphogenesis in Magnaporthe grisea.</title>
        <authorList>
            <person name="Zhao X."/>
            <person name="Kim Y."/>
            <person name="Park G."/>
            <person name="Xu J.R."/>
        </authorList>
    </citation>
    <scope>FUNCTION</scope>
    <scope>INTERACTION WITH MST7 AND MST11</scope>
</reference>
<reference key="3">
    <citation type="journal article" date="2013" name="Gene Expr. Patterns">
        <title>Complexity of roles and regulation of the PMK1-MAPK pathway in mycelium development, conidiation and appressorium formation in Magnaporthe oryzae.</title>
        <authorList>
            <person name="Jin Q."/>
            <person name="Li C."/>
            <person name="Li Y."/>
            <person name="Shang J."/>
            <person name="Li D."/>
            <person name="Chen B."/>
            <person name="Dong H."/>
        </authorList>
    </citation>
    <scope>FUNCTION</scope>
    <scope>DISRUPTION PHENOTYPE</scope>
</reference>
<reference key="4">
    <citation type="journal article" date="2017" name="Environ. Microbiol.">
        <title>MST50 is involved in multiple MAP kinase signaling pathways in Magnaporthe oryzae.</title>
        <authorList>
            <person name="Li G."/>
            <person name="Zhang X."/>
            <person name="Tian H."/>
            <person name="Choi Y.E."/>
            <person name="Tao W.A."/>
            <person name="Xu J.R."/>
        </authorList>
    </citation>
    <scope>FUNCTION</scope>
    <scope>INTERACTION WITH MCK1; MKK2 AND HIK1</scope>
    <scope>DOMAIN</scope>
    <scope>DISRUPTION PHENOTYPE</scope>
</reference>